<accession>Q9CC91</accession>
<proteinExistence type="inferred from homology"/>
<evidence type="ECO:0000250" key="1">
    <source>
        <dbReference type="UniProtKB" id="P9WM53"/>
    </source>
</evidence>
<evidence type="ECO:0000250" key="2">
    <source>
        <dbReference type="UniProtKB" id="Q5SJ65"/>
    </source>
</evidence>
<evidence type="ECO:0000305" key="3"/>
<organism>
    <name type="scientific">Mycobacterium leprae (strain TN)</name>
    <dbReference type="NCBI Taxonomy" id="272631"/>
    <lineage>
        <taxon>Bacteria</taxon>
        <taxon>Bacillati</taxon>
        <taxon>Actinomycetota</taxon>
        <taxon>Actinomycetes</taxon>
        <taxon>Mycobacteriales</taxon>
        <taxon>Mycobacteriaceae</taxon>
        <taxon>Mycobacterium</taxon>
    </lineage>
</organism>
<comment type="function">
    <text evidence="1">DNA glycosylase with broad substrate specificity.</text>
</comment>
<comment type="similarity">
    <text evidence="3">Belongs to the uracil-DNA glycosylase (UDG) superfamily. Type 5 (UDGb) family.</text>
</comment>
<reference key="1">
    <citation type="journal article" date="2001" name="Nature">
        <title>Massive gene decay in the leprosy bacillus.</title>
        <authorList>
            <person name="Cole S.T."/>
            <person name="Eiglmeier K."/>
            <person name="Parkhill J."/>
            <person name="James K.D."/>
            <person name="Thomson N.R."/>
            <person name="Wheeler P.R."/>
            <person name="Honore N."/>
            <person name="Garnier T."/>
            <person name="Churcher C.M."/>
            <person name="Harris D.E."/>
            <person name="Mungall K.L."/>
            <person name="Basham D."/>
            <person name="Brown D."/>
            <person name="Chillingworth T."/>
            <person name="Connor R."/>
            <person name="Davies R.M."/>
            <person name="Devlin K."/>
            <person name="Duthoy S."/>
            <person name="Feltwell T."/>
            <person name="Fraser A."/>
            <person name="Hamlin N."/>
            <person name="Holroyd S."/>
            <person name="Hornsby T."/>
            <person name="Jagels K."/>
            <person name="Lacroix C."/>
            <person name="Maclean J."/>
            <person name="Moule S."/>
            <person name="Murphy L.D."/>
            <person name="Oliver K."/>
            <person name="Quail M.A."/>
            <person name="Rajandream M.A."/>
            <person name="Rutherford K.M."/>
            <person name="Rutter S."/>
            <person name="Seeger K."/>
            <person name="Simon S."/>
            <person name="Simmonds M."/>
            <person name="Skelton J."/>
            <person name="Squares R."/>
            <person name="Squares S."/>
            <person name="Stevens K."/>
            <person name="Taylor K."/>
            <person name="Whitehead S."/>
            <person name="Woodward J.R."/>
            <person name="Barrell B.G."/>
        </authorList>
    </citation>
    <scope>NUCLEOTIDE SEQUENCE [LARGE SCALE GENOMIC DNA]</scope>
    <source>
        <strain>TN</strain>
    </source>
</reference>
<dbReference type="EC" id="3.2.2.-" evidence="1"/>
<dbReference type="EMBL" id="AL583920">
    <property type="protein sequence ID" value="CAC31486.1"/>
    <property type="molecule type" value="Genomic_DNA"/>
</dbReference>
<dbReference type="PIR" id="C87047">
    <property type="entry name" value="C87047"/>
</dbReference>
<dbReference type="RefSeq" id="NP_301808.1">
    <property type="nucleotide sequence ID" value="NC_002677.1"/>
</dbReference>
<dbReference type="SMR" id="Q9CC91"/>
<dbReference type="STRING" id="272631.gene:17574931"/>
<dbReference type="KEGG" id="mle:ML1105"/>
<dbReference type="PATRIC" id="fig|272631.5.peg.1987"/>
<dbReference type="Leproma" id="ML1105"/>
<dbReference type="eggNOG" id="COG1573">
    <property type="taxonomic scope" value="Bacteria"/>
</dbReference>
<dbReference type="HOGENOM" id="CLU_083279_0_0_11"/>
<dbReference type="OrthoDB" id="9787663at2"/>
<dbReference type="Proteomes" id="UP000000806">
    <property type="component" value="Chromosome"/>
</dbReference>
<dbReference type="GO" id="GO:0051539">
    <property type="term" value="F:4 iron, 4 sulfur cluster binding"/>
    <property type="evidence" value="ECO:0007669"/>
    <property type="project" value="UniProtKB-KW"/>
</dbReference>
<dbReference type="GO" id="GO:0033958">
    <property type="term" value="F:DNA-deoxyinosine glycosylase activity"/>
    <property type="evidence" value="ECO:0007669"/>
    <property type="project" value="InterPro"/>
</dbReference>
<dbReference type="GO" id="GO:0046872">
    <property type="term" value="F:metal ion binding"/>
    <property type="evidence" value="ECO:0007669"/>
    <property type="project" value="UniProtKB-KW"/>
</dbReference>
<dbReference type="GO" id="GO:0004844">
    <property type="term" value="F:uracil DNA N-glycosylase activity"/>
    <property type="evidence" value="ECO:0007669"/>
    <property type="project" value="InterPro"/>
</dbReference>
<dbReference type="GO" id="GO:0006284">
    <property type="term" value="P:base-excision repair"/>
    <property type="evidence" value="ECO:0007669"/>
    <property type="project" value="InterPro"/>
</dbReference>
<dbReference type="CDD" id="cd10031">
    <property type="entry name" value="UDG-F5_TTUDGB_like"/>
    <property type="match status" value="1"/>
</dbReference>
<dbReference type="Gene3D" id="3.40.470.10">
    <property type="entry name" value="Uracil-DNA glycosylase-like domain"/>
    <property type="match status" value="1"/>
</dbReference>
<dbReference type="InterPro" id="IPR051536">
    <property type="entry name" value="UDG_Type-4/5"/>
</dbReference>
<dbReference type="InterPro" id="IPR044147">
    <property type="entry name" value="UdgB-like"/>
</dbReference>
<dbReference type="InterPro" id="IPR005122">
    <property type="entry name" value="Uracil-DNA_glycosylase-like"/>
</dbReference>
<dbReference type="InterPro" id="IPR036895">
    <property type="entry name" value="Uracil-DNA_glycosylase-like_sf"/>
</dbReference>
<dbReference type="PANTHER" id="PTHR33693">
    <property type="entry name" value="TYPE-5 URACIL-DNA GLYCOSYLASE"/>
    <property type="match status" value="1"/>
</dbReference>
<dbReference type="PANTHER" id="PTHR33693:SF3">
    <property type="entry name" value="TYPE-5 URACIL-DNA GLYCOSYLASE"/>
    <property type="match status" value="1"/>
</dbReference>
<dbReference type="Pfam" id="PF03167">
    <property type="entry name" value="UDG"/>
    <property type="match status" value="1"/>
</dbReference>
<dbReference type="SMART" id="SM00986">
    <property type="entry name" value="UDG"/>
    <property type="match status" value="1"/>
</dbReference>
<dbReference type="SMART" id="SM00987">
    <property type="entry name" value="UreE_C"/>
    <property type="match status" value="1"/>
</dbReference>
<dbReference type="SUPFAM" id="SSF52141">
    <property type="entry name" value="Uracil-DNA glycosylase-like"/>
    <property type="match status" value="1"/>
</dbReference>
<feature type="chain" id="PRO_0000103776" description="Type-5 uracil-DNA glycosylase">
    <location>
        <begin position="1"/>
        <end position="229"/>
    </location>
</feature>
<feature type="binding site" evidence="2">
    <location>
        <position position="19"/>
    </location>
    <ligand>
        <name>[4Fe-4S] cluster</name>
        <dbReference type="ChEBI" id="CHEBI:49883"/>
    </ligand>
</feature>
<feature type="binding site" evidence="2">
    <location>
        <position position="22"/>
    </location>
    <ligand>
        <name>[4Fe-4S] cluster</name>
        <dbReference type="ChEBI" id="CHEBI:49883"/>
    </ligand>
</feature>
<feature type="binding site" evidence="2">
    <location>
        <position position="123"/>
    </location>
    <ligand>
        <name>[4Fe-4S] cluster</name>
        <dbReference type="ChEBI" id="CHEBI:49883"/>
    </ligand>
</feature>
<feature type="binding site" evidence="2">
    <location>
        <position position="138"/>
    </location>
    <ligand>
        <name>[4Fe-4S] cluster</name>
        <dbReference type="ChEBI" id="CHEBI:49883"/>
    </ligand>
</feature>
<protein>
    <recommendedName>
        <fullName evidence="1">Type-5 uracil-DNA glycosylase</fullName>
        <ecNumber evidence="1">3.2.2.-</ecNumber>
    </recommendedName>
</protein>
<keyword id="KW-0004">4Fe-4S</keyword>
<keyword id="KW-0227">DNA damage</keyword>
<keyword id="KW-0234">DNA repair</keyword>
<keyword id="KW-0378">Hydrolase</keyword>
<keyword id="KW-0408">Iron</keyword>
<keyword id="KW-0411">Iron-sulfur</keyword>
<keyword id="KW-0479">Metal-binding</keyword>
<keyword id="KW-1185">Reference proteome</keyword>
<name>UDGB_MYCLE</name>
<gene>
    <name evidence="1" type="primary">udgB</name>
    <name type="ordered locus">ML1105</name>
</gene>
<sequence length="229" mass="24937">MLSGGAGSIPELNAQISVCRACPRLVDWREEVAVVKRRAFADQPYWGRPVPGWGSEQPRLLIVGLAPAAHGANRTGRMFTGDRSGDQLYAALHRAGLVNLPISMDAADGLQANQIRITAPVRCAPPGNAPTQAEWVTCSPWLEAEWRLVSEYVRAIVALGGFAWQIVLRLPGVSAMRKPRFSHGVVAQLYAGVRLLGCYHPSQQNMFTGRLTPAMLDDIFRDAKKLAGI</sequence>